<feature type="chain" id="PRO_0000123219" description="Small ribosomal subunit protein uS11">
    <location>
        <begin position="1"/>
        <end position="129"/>
    </location>
</feature>
<name>RS11_STAAM</name>
<keyword id="KW-0687">Ribonucleoprotein</keyword>
<keyword id="KW-0689">Ribosomal protein</keyword>
<keyword id="KW-0694">RNA-binding</keyword>
<keyword id="KW-0699">rRNA-binding</keyword>
<sequence>MARKQVSRKRRVKKNIENGVAHIRSTFNNTIVTITDEFGNALSWSSAGALGFKGSKKSTPFAAQMASETASKSAMEHGLKTVEVTVKGPGPGRESAIRALQSAGLEVTAIRDVTPVPHNGCRPPKRRRV</sequence>
<dbReference type="EMBL" id="BA000017">
    <property type="protein sequence ID" value="BAB58387.1"/>
    <property type="molecule type" value="Genomic_DNA"/>
</dbReference>
<dbReference type="RefSeq" id="WP_000101625.1">
    <property type="nucleotide sequence ID" value="NC_002758.2"/>
</dbReference>
<dbReference type="SMR" id="P66356"/>
<dbReference type="GeneID" id="98346537"/>
<dbReference type="KEGG" id="sav:SAV2225"/>
<dbReference type="HOGENOM" id="CLU_072439_5_0_9"/>
<dbReference type="PhylomeDB" id="P66356"/>
<dbReference type="Proteomes" id="UP000002481">
    <property type="component" value="Chromosome"/>
</dbReference>
<dbReference type="GO" id="GO:1990904">
    <property type="term" value="C:ribonucleoprotein complex"/>
    <property type="evidence" value="ECO:0007669"/>
    <property type="project" value="UniProtKB-KW"/>
</dbReference>
<dbReference type="GO" id="GO:0005840">
    <property type="term" value="C:ribosome"/>
    <property type="evidence" value="ECO:0007669"/>
    <property type="project" value="UniProtKB-KW"/>
</dbReference>
<dbReference type="GO" id="GO:0019843">
    <property type="term" value="F:rRNA binding"/>
    <property type="evidence" value="ECO:0007669"/>
    <property type="project" value="UniProtKB-UniRule"/>
</dbReference>
<dbReference type="GO" id="GO:0003735">
    <property type="term" value="F:structural constituent of ribosome"/>
    <property type="evidence" value="ECO:0007669"/>
    <property type="project" value="InterPro"/>
</dbReference>
<dbReference type="GO" id="GO:0006412">
    <property type="term" value="P:translation"/>
    <property type="evidence" value="ECO:0007669"/>
    <property type="project" value="UniProtKB-UniRule"/>
</dbReference>
<dbReference type="FunFam" id="3.30.420.80:FF:000001">
    <property type="entry name" value="30S ribosomal protein S11"/>
    <property type="match status" value="1"/>
</dbReference>
<dbReference type="Gene3D" id="3.30.420.80">
    <property type="entry name" value="Ribosomal protein S11"/>
    <property type="match status" value="1"/>
</dbReference>
<dbReference type="HAMAP" id="MF_01310">
    <property type="entry name" value="Ribosomal_uS11"/>
    <property type="match status" value="1"/>
</dbReference>
<dbReference type="InterPro" id="IPR001971">
    <property type="entry name" value="Ribosomal_uS11"/>
</dbReference>
<dbReference type="InterPro" id="IPR019981">
    <property type="entry name" value="Ribosomal_uS11_bac-type"/>
</dbReference>
<dbReference type="InterPro" id="IPR018102">
    <property type="entry name" value="Ribosomal_uS11_CS"/>
</dbReference>
<dbReference type="InterPro" id="IPR036967">
    <property type="entry name" value="Ribosomal_uS11_sf"/>
</dbReference>
<dbReference type="NCBIfam" id="NF003698">
    <property type="entry name" value="PRK05309.1"/>
    <property type="match status" value="1"/>
</dbReference>
<dbReference type="NCBIfam" id="TIGR03632">
    <property type="entry name" value="uS11_bact"/>
    <property type="match status" value="1"/>
</dbReference>
<dbReference type="PANTHER" id="PTHR11759">
    <property type="entry name" value="40S RIBOSOMAL PROTEIN S14/30S RIBOSOMAL PROTEIN S11"/>
    <property type="match status" value="1"/>
</dbReference>
<dbReference type="Pfam" id="PF00411">
    <property type="entry name" value="Ribosomal_S11"/>
    <property type="match status" value="1"/>
</dbReference>
<dbReference type="PIRSF" id="PIRSF002131">
    <property type="entry name" value="Ribosomal_S11"/>
    <property type="match status" value="1"/>
</dbReference>
<dbReference type="SUPFAM" id="SSF53137">
    <property type="entry name" value="Translational machinery components"/>
    <property type="match status" value="1"/>
</dbReference>
<dbReference type="PROSITE" id="PS00054">
    <property type="entry name" value="RIBOSOMAL_S11"/>
    <property type="match status" value="1"/>
</dbReference>
<reference key="1">
    <citation type="journal article" date="2001" name="Lancet">
        <title>Whole genome sequencing of meticillin-resistant Staphylococcus aureus.</title>
        <authorList>
            <person name="Kuroda M."/>
            <person name="Ohta T."/>
            <person name="Uchiyama I."/>
            <person name="Baba T."/>
            <person name="Yuzawa H."/>
            <person name="Kobayashi I."/>
            <person name="Cui L."/>
            <person name="Oguchi A."/>
            <person name="Aoki K."/>
            <person name="Nagai Y."/>
            <person name="Lian J.-Q."/>
            <person name="Ito T."/>
            <person name="Kanamori M."/>
            <person name="Matsumaru H."/>
            <person name="Maruyama A."/>
            <person name="Murakami H."/>
            <person name="Hosoyama A."/>
            <person name="Mizutani-Ui Y."/>
            <person name="Takahashi N.K."/>
            <person name="Sawano T."/>
            <person name="Inoue R."/>
            <person name="Kaito C."/>
            <person name="Sekimizu K."/>
            <person name="Hirakawa H."/>
            <person name="Kuhara S."/>
            <person name="Goto S."/>
            <person name="Yabuzaki J."/>
            <person name="Kanehisa M."/>
            <person name="Yamashita A."/>
            <person name="Oshima K."/>
            <person name="Furuya K."/>
            <person name="Yoshino C."/>
            <person name="Shiba T."/>
            <person name="Hattori M."/>
            <person name="Ogasawara N."/>
            <person name="Hayashi H."/>
            <person name="Hiramatsu K."/>
        </authorList>
    </citation>
    <scope>NUCLEOTIDE SEQUENCE [LARGE SCALE GENOMIC DNA]</scope>
    <source>
        <strain>Mu50 / ATCC 700699</strain>
    </source>
</reference>
<gene>
    <name evidence="1" type="primary">rpsK</name>
    <name type="ordered locus">SAV2225</name>
</gene>
<accession>P66356</accession>
<accession>Q99S44</accession>
<evidence type="ECO:0000255" key="1">
    <source>
        <dbReference type="HAMAP-Rule" id="MF_01310"/>
    </source>
</evidence>
<evidence type="ECO:0000305" key="2"/>
<protein>
    <recommendedName>
        <fullName evidence="1">Small ribosomal subunit protein uS11</fullName>
    </recommendedName>
    <alternativeName>
        <fullName evidence="2">30S ribosomal protein S11</fullName>
    </alternativeName>
</protein>
<comment type="function">
    <text evidence="1">Located on the platform of the 30S subunit, it bridges several disparate RNA helices of the 16S rRNA. Forms part of the Shine-Dalgarno cleft in the 70S ribosome.</text>
</comment>
<comment type="subunit">
    <text evidence="1">Part of the 30S ribosomal subunit. Interacts with proteins S7 and S18. Binds to IF-3.</text>
</comment>
<comment type="similarity">
    <text evidence="1">Belongs to the universal ribosomal protein uS11 family.</text>
</comment>
<proteinExistence type="inferred from homology"/>
<organism>
    <name type="scientific">Staphylococcus aureus (strain Mu50 / ATCC 700699)</name>
    <dbReference type="NCBI Taxonomy" id="158878"/>
    <lineage>
        <taxon>Bacteria</taxon>
        <taxon>Bacillati</taxon>
        <taxon>Bacillota</taxon>
        <taxon>Bacilli</taxon>
        <taxon>Bacillales</taxon>
        <taxon>Staphylococcaceae</taxon>
        <taxon>Staphylococcus</taxon>
    </lineage>
</organism>